<evidence type="ECO:0000255" key="1">
    <source>
        <dbReference type="HAMAP-Rule" id="MF_01188"/>
    </source>
</evidence>
<evidence type="ECO:0000256" key="2">
    <source>
        <dbReference type="SAM" id="MobiDB-lite"/>
    </source>
</evidence>
<evidence type="ECO:0000305" key="3"/>
<comment type="similarity">
    <text evidence="1">Belongs to the UPF0441 family.</text>
</comment>
<comment type="sequence caution" evidence="3">
    <conflict type="erroneous initiation">
        <sequence resource="EMBL-CDS" id="ABG15092"/>
    </conflict>
</comment>
<proteinExistence type="inferred from homology"/>
<sequence>MKRTKNINQETFRKSWRSYRLAPVALAVSAVFMLAGCEKTDETVSLYQNADDCSQANPSQSAECTTAYNTALQEAVKTAPKYATREDCVAEFGESQCTQAPAQAGMVPTSSSETTAAAPQQSGSMWMPLMAGYMMGRMMGGGASQPLFTSKAPNSPANGKFVDASGKNFGAATTGRTMTVPKTALAPKPAVTKTITRGGFGESVAKQSSMQRSAATSSKTTTRSMGG</sequence>
<dbReference type="EMBL" id="CP000308">
    <property type="protein sequence ID" value="ABG15092.1"/>
    <property type="status" value="ALT_INIT"/>
    <property type="molecule type" value="Genomic_DNA"/>
</dbReference>
<dbReference type="RefSeq" id="WP_002357252.1">
    <property type="nucleotide sequence ID" value="NZ_CP009906.1"/>
</dbReference>
<dbReference type="SMR" id="Q1C380"/>
<dbReference type="KEGG" id="ypa:YPA_3130"/>
<dbReference type="Proteomes" id="UP000001971">
    <property type="component" value="Chromosome"/>
</dbReference>
<dbReference type="HAMAP" id="MF_01188">
    <property type="entry name" value="UPF0441"/>
    <property type="match status" value="1"/>
</dbReference>
<dbReference type="InterPro" id="IPR009576">
    <property type="entry name" value="Biofilm_formation_YgiB"/>
</dbReference>
<dbReference type="NCBIfam" id="NF008655">
    <property type="entry name" value="PRK11653.1"/>
    <property type="match status" value="1"/>
</dbReference>
<dbReference type="Pfam" id="PF06693">
    <property type="entry name" value="DUF1190"/>
    <property type="match status" value="1"/>
</dbReference>
<organism>
    <name type="scientific">Yersinia pestis bv. Antiqua (strain Antiqua)</name>
    <dbReference type="NCBI Taxonomy" id="360102"/>
    <lineage>
        <taxon>Bacteria</taxon>
        <taxon>Pseudomonadati</taxon>
        <taxon>Pseudomonadota</taxon>
        <taxon>Gammaproteobacteria</taxon>
        <taxon>Enterobacterales</taxon>
        <taxon>Yersiniaceae</taxon>
        <taxon>Yersinia</taxon>
    </lineage>
</organism>
<feature type="chain" id="PRO_5000116233" description="UPF0441 protein YPA_3130">
    <location>
        <begin position="1"/>
        <end position="227"/>
    </location>
</feature>
<feature type="region of interest" description="Disordered" evidence="2">
    <location>
        <begin position="198"/>
        <end position="227"/>
    </location>
</feature>
<feature type="compositionally biased region" description="Low complexity" evidence="2">
    <location>
        <begin position="212"/>
        <end position="227"/>
    </location>
</feature>
<gene>
    <name type="ordered locus">YPA_3130</name>
</gene>
<reference key="1">
    <citation type="journal article" date="2006" name="J. Bacteriol.">
        <title>Complete genome sequence of Yersinia pestis strains Antiqua and Nepal516: evidence of gene reduction in an emerging pathogen.</title>
        <authorList>
            <person name="Chain P.S.G."/>
            <person name="Hu P."/>
            <person name="Malfatti S.A."/>
            <person name="Radnedge L."/>
            <person name="Larimer F."/>
            <person name="Vergez L.M."/>
            <person name="Worsham P."/>
            <person name="Chu M.C."/>
            <person name="Andersen G.L."/>
        </authorList>
    </citation>
    <scope>NUCLEOTIDE SEQUENCE [LARGE SCALE GENOMIC DNA]</scope>
    <source>
        <strain>Antiqua</strain>
    </source>
</reference>
<protein>
    <recommendedName>
        <fullName evidence="1">UPF0441 protein YPA_3130</fullName>
    </recommendedName>
</protein>
<name>Y3130_YERPA</name>
<accession>Q1C380</accession>